<keyword id="KW-0028">Amino-acid biosynthesis</keyword>
<keyword id="KW-0963">Cytoplasm</keyword>
<keyword id="KW-0521">NADP</keyword>
<keyword id="KW-0560">Oxidoreductase</keyword>
<keyword id="KW-0641">Proline biosynthesis</keyword>
<keyword id="KW-1185">Reference proteome</keyword>
<comment type="function">
    <text evidence="1">Catalyzes the NADPH-dependent reduction of L-glutamate 5-phosphate into L-glutamate 5-semialdehyde and phosphate. The product spontaneously undergoes cyclization to form 1-pyrroline-5-carboxylate.</text>
</comment>
<comment type="catalytic activity">
    <reaction evidence="1">
        <text>L-glutamate 5-semialdehyde + phosphate + NADP(+) = L-glutamyl 5-phosphate + NADPH + H(+)</text>
        <dbReference type="Rhea" id="RHEA:19541"/>
        <dbReference type="ChEBI" id="CHEBI:15378"/>
        <dbReference type="ChEBI" id="CHEBI:43474"/>
        <dbReference type="ChEBI" id="CHEBI:57783"/>
        <dbReference type="ChEBI" id="CHEBI:58066"/>
        <dbReference type="ChEBI" id="CHEBI:58274"/>
        <dbReference type="ChEBI" id="CHEBI:58349"/>
        <dbReference type="EC" id="1.2.1.41"/>
    </reaction>
</comment>
<comment type="pathway">
    <text evidence="1">Amino-acid biosynthesis; L-proline biosynthesis; L-glutamate 5-semialdehyde from L-glutamate: step 2/2.</text>
</comment>
<comment type="subcellular location">
    <subcellularLocation>
        <location evidence="1">Cytoplasm</location>
    </subcellularLocation>
</comment>
<comment type="similarity">
    <text evidence="1">Belongs to the gamma-glutamyl phosphate reductase family.</text>
</comment>
<gene>
    <name evidence="1" type="primary">proA</name>
    <name type="ordered locus">Helmi_26060</name>
    <name type="ORF">HM1_2702</name>
</gene>
<sequence>MIVYSELSLKGKKAKDAAYKLGSLSSQVKNKALEAMAYALVAQEEEILAANALDMEAGRQKGMSKALLDRLMLNKKRIEEMAEGLYALVSLPDPIGEVKRQWRRPNGLEIGQVRVPLGVVGIIYEARPNVTVDAAGLCLKTGNAVILRGGSEAIRSNMAIVKAISKASEEAGIPEGAIQLVEDSSREVAQQMMTMNEYLDVLIPRGGAGLIQAVVKNATVPVIETGVGNCHIYVDADADLEMAEKIIINAKCQRPGVCNAAESLLVHQDVARKFIPHIGKVLTEMNVELRGCPRTLSLFSGIKEATDEDYATEFLDLILAVKIVDSFDEALEHIRKYSTGHSEAIVTRDYSRAREFTRRVDAAAVYVNASTRFTDGFQFGMGAEIGISTQKLHARGPMGLNELTTIKYVCYGDGQIR</sequence>
<accession>B0TBV8</accession>
<reference key="1">
    <citation type="journal article" date="2008" name="J. Bacteriol.">
        <title>The genome of Heliobacterium modesticaldum, a phototrophic representative of the Firmicutes containing the simplest photosynthetic apparatus.</title>
        <authorList>
            <person name="Sattley W.M."/>
            <person name="Madigan M.T."/>
            <person name="Swingley W.D."/>
            <person name="Cheung P.C."/>
            <person name="Clocksin K.M."/>
            <person name="Conrad A.L."/>
            <person name="Dejesa L.C."/>
            <person name="Honchak B.M."/>
            <person name="Jung D.O."/>
            <person name="Karbach L.E."/>
            <person name="Kurdoglu A."/>
            <person name="Lahiri S."/>
            <person name="Mastrian S.D."/>
            <person name="Page L.E."/>
            <person name="Taylor H.L."/>
            <person name="Wang Z.T."/>
            <person name="Raymond J."/>
            <person name="Chen M."/>
            <person name="Blankenship R.E."/>
            <person name="Touchman J.W."/>
        </authorList>
    </citation>
    <scope>NUCLEOTIDE SEQUENCE [LARGE SCALE GENOMIC DNA]</scope>
    <source>
        <strain>ATCC 51547 / Ice1</strain>
    </source>
</reference>
<evidence type="ECO:0000255" key="1">
    <source>
        <dbReference type="HAMAP-Rule" id="MF_00412"/>
    </source>
</evidence>
<feature type="chain" id="PRO_1000123811" description="Gamma-glutamyl phosphate reductase">
    <location>
        <begin position="1"/>
        <end position="417"/>
    </location>
</feature>
<dbReference type="EC" id="1.2.1.41" evidence="1"/>
<dbReference type="EMBL" id="CP000930">
    <property type="protein sequence ID" value="ABZ85231.1"/>
    <property type="molecule type" value="Genomic_DNA"/>
</dbReference>
<dbReference type="RefSeq" id="WP_012283716.1">
    <property type="nucleotide sequence ID" value="NC_010337.2"/>
</dbReference>
<dbReference type="SMR" id="B0TBV8"/>
<dbReference type="STRING" id="498761.HM1_2702"/>
<dbReference type="KEGG" id="hmo:HM1_2702"/>
<dbReference type="eggNOG" id="COG0014">
    <property type="taxonomic scope" value="Bacteria"/>
</dbReference>
<dbReference type="HOGENOM" id="CLU_030231_0_0_9"/>
<dbReference type="OrthoDB" id="9809970at2"/>
<dbReference type="UniPathway" id="UPA00098">
    <property type="reaction ID" value="UER00360"/>
</dbReference>
<dbReference type="Proteomes" id="UP000008550">
    <property type="component" value="Chromosome"/>
</dbReference>
<dbReference type="GO" id="GO:0005737">
    <property type="term" value="C:cytoplasm"/>
    <property type="evidence" value="ECO:0007669"/>
    <property type="project" value="UniProtKB-SubCell"/>
</dbReference>
<dbReference type="GO" id="GO:0004350">
    <property type="term" value="F:glutamate-5-semialdehyde dehydrogenase activity"/>
    <property type="evidence" value="ECO:0007669"/>
    <property type="project" value="UniProtKB-UniRule"/>
</dbReference>
<dbReference type="GO" id="GO:0050661">
    <property type="term" value="F:NADP binding"/>
    <property type="evidence" value="ECO:0007669"/>
    <property type="project" value="InterPro"/>
</dbReference>
<dbReference type="GO" id="GO:0055129">
    <property type="term" value="P:L-proline biosynthetic process"/>
    <property type="evidence" value="ECO:0007669"/>
    <property type="project" value="UniProtKB-UniRule"/>
</dbReference>
<dbReference type="CDD" id="cd07079">
    <property type="entry name" value="ALDH_F18-19_ProA-GPR"/>
    <property type="match status" value="1"/>
</dbReference>
<dbReference type="FunFam" id="3.40.309.10:FF:000006">
    <property type="entry name" value="Gamma-glutamyl phosphate reductase"/>
    <property type="match status" value="1"/>
</dbReference>
<dbReference type="Gene3D" id="3.40.605.10">
    <property type="entry name" value="Aldehyde Dehydrogenase, Chain A, domain 1"/>
    <property type="match status" value="1"/>
</dbReference>
<dbReference type="Gene3D" id="3.40.309.10">
    <property type="entry name" value="Aldehyde Dehydrogenase, Chain A, domain 2"/>
    <property type="match status" value="1"/>
</dbReference>
<dbReference type="HAMAP" id="MF_00412">
    <property type="entry name" value="ProA"/>
    <property type="match status" value="1"/>
</dbReference>
<dbReference type="InterPro" id="IPR016161">
    <property type="entry name" value="Ald_DH/histidinol_DH"/>
</dbReference>
<dbReference type="InterPro" id="IPR016163">
    <property type="entry name" value="Ald_DH_C"/>
</dbReference>
<dbReference type="InterPro" id="IPR016162">
    <property type="entry name" value="Ald_DH_N"/>
</dbReference>
<dbReference type="InterPro" id="IPR015590">
    <property type="entry name" value="Aldehyde_DH_dom"/>
</dbReference>
<dbReference type="InterPro" id="IPR020593">
    <property type="entry name" value="G-glutamylP_reductase_CS"/>
</dbReference>
<dbReference type="InterPro" id="IPR012134">
    <property type="entry name" value="Glu-5-SA_DH"/>
</dbReference>
<dbReference type="InterPro" id="IPR000965">
    <property type="entry name" value="GPR_dom"/>
</dbReference>
<dbReference type="NCBIfam" id="NF001221">
    <property type="entry name" value="PRK00197.1"/>
    <property type="match status" value="1"/>
</dbReference>
<dbReference type="NCBIfam" id="TIGR00407">
    <property type="entry name" value="proA"/>
    <property type="match status" value="1"/>
</dbReference>
<dbReference type="PANTHER" id="PTHR11063:SF8">
    <property type="entry name" value="DELTA-1-PYRROLINE-5-CARBOXYLATE SYNTHASE"/>
    <property type="match status" value="1"/>
</dbReference>
<dbReference type="PANTHER" id="PTHR11063">
    <property type="entry name" value="GLUTAMATE SEMIALDEHYDE DEHYDROGENASE"/>
    <property type="match status" value="1"/>
</dbReference>
<dbReference type="Pfam" id="PF00171">
    <property type="entry name" value="Aldedh"/>
    <property type="match status" value="2"/>
</dbReference>
<dbReference type="PIRSF" id="PIRSF000151">
    <property type="entry name" value="GPR"/>
    <property type="match status" value="1"/>
</dbReference>
<dbReference type="SUPFAM" id="SSF53720">
    <property type="entry name" value="ALDH-like"/>
    <property type="match status" value="1"/>
</dbReference>
<dbReference type="PROSITE" id="PS01223">
    <property type="entry name" value="PROA"/>
    <property type="match status" value="1"/>
</dbReference>
<protein>
    <recommendedName>
        <fullName evidence="1">Gamma-glutamyl phosphate reductase</fullName>
        <shortName evidence="1">GPR</shortName>
        <ecNumber evidence="1">1.2.1.41</ecNumber>
    </recommendedName>
    <alternativeName>
        <fullName evidence="1">Glutamate-5-semialdehyde dehydrogenase</fullName>
    </alternativeName>
    <alternativeName>
        <fullName evidence="1">Glutamyl-gamma-semialdehyde dehydrogenase</fullName>
        <shortName evidence="1">GSA dehydrogenase</shortName>
    </alternativeName>
</protein>
<name>PROA_HELMI</name>
<organism>
    <name type="scientific">Heliobacterium modesticaldum (strain ATCC 51547 / Ice1)</name>
    <dbReference type="NCBI Taxonomy" id="498761"/>
    <lineage>
        <taxon>Bacteria</taxon>
        <taxon>Bacillati</taxon>
        <taxon>Bacillota</taxon>
        <taxon>Clostridia</taxon>
        <taxon>Eubacteriales</taxon>
        <taxon>Heliobacteriaceae</taxon>
        <taxon>Heliomicrobium</taxon>
    </lineage>
</organism>
<proteinExistence type="inferred from homology"/>